<keyword id="KW-0997">Cell inner membrane</keyword>
<keyword id="KW-1003">Cell membrane</keyword>
<keyword id="KW-0274">FAD</keyword>
<keyword id="KW-0285">Flavoprotein</keyword>
<keyword id="KW-0472">Membrane</keyword>
<keyword id="KW-0560">Oxidoreductase</keyword>
<keyword id="KW-1185">Reference proteome</keyword>
<feature type="chain" id="PRO_0000166131" description="D-amino acid dehydrogenase">
    <location>
        <begin position="1"/>
        <end position="432"/>
    </location>
</feature>
<feature type="binding site" evidence="2">
    <location>
        <begin position="3"/>
        <end position="17"/>
    </location>
    <ligand>
        <name>FAD</name>
        <dbReference type="ChEBI" id="CHEBI:57692"/>
    </ligand>
</feature>
<protein>
    <recommendedName>
        <fullName>D-amino acid dehydrogenase</fullName>
        <ecNumber evidence="4 5">1.4.99.-</ecNumber>
    </recommendedName>
    <alternativeName>
        <fullName>D-alanine dehydrogenase</fullName>
    </alternativeName>
</protein>
<proteinExistence type="evidence at protein level"/>
<evidence type="ECO:0000250" key="1"/>
<evidence type="ECO:0000255" key="2"/>
<evidence type="ECO:0000269" key="3">
    <source>
    </source>
</evidence>
<evidence type="ECO:0000269" key="4">
    <source>
    </source>
</evidence>
<evidence type="ECO:0000269" key="5">
    <source>
    </source>
</evidence>
<evidence type="ECO:0000269" key="6">
    <source>
    </source>
</evidence>
<evidence type="ECO:0000305" key="7"/>
<sequence length="432" mass="47607">MRVVILGSGVVGVASAWYLNQAGHEVTVIDREPGAALETSAANAGQISPGYAAPWAAPGVPLKAIKWMFQRHAPLAVRLDGTQFQLKWMWQMLRNCDTSHYMENKGRMVRLAEYSRDCLKALRAETNIQYEGRQGGTLQLFRTEQQYENATRDIAVLEDAGVPYQLLESSRLAEVEPALAEVAHKLTGGLQLPNDETGDCQLFTQNLARMAEQAGVKFRFNTPVDQLLCDGEQIYGVKCGDEVIKADAYVMAFGSYSTAMLKGIVDIPVYPLKGYSLTIPIAQEDGAPVSTILDETYKIAITRFDNRIRVGGMAEIVGFNTELLQPRRETLEMVVRDLYPRGGHVEQATFWTGLRPMTPDGTPVVGRTRFKNLWLNTGHGTLGWTMACGSGQLLSDLLSGRTPAIPYEDLSVARYSRGFTPSRPGHLHGAHS</sequence>
<gene>
    <name type="primary">dadA</name>
    <name type="synonym">dadR</name>
    <name type="ordered locus">b1189</name>
    <name type="ordered locus">JW1178</name>
</gene>
<name>DADA_ECOLI</name>
<organism>
    <name type="scientific">Escherichia coli (strain K12)</name>
    <dbReference type="NCBI Taxonomy" id="83333"/>
    <lineage>
        <taxon>Bacteria</taxon>
        <taxon>Pseudomonadati</taxon>
        <taxon>Pseudomonadota</taxon>
        <taxon>Gammaproteobacteria</taxon>
        <taxon>Enterobacterales</taxon>
        <taxon>Enterobacteriaceae</taxon>
        <taxon>Escherichia</taxon>
    </lineage>
</organism>
<accession>P0A6J5</accession>
<accession>P29011</accession>
<dbReference type="EC" id="1.4.99.-" evidence="4 5"/>
<dbReference type="EMBL" id="L02948">
    <property type="protein sequence ID" value="AAC36880.1"/>
    <property type="molecule type" value="Unassigned_DNA"/>
</dbReference>
<dbReference type="EMBL" id="U00096">
    <property type="protein sequence ID" value="AAC74273.1"/>
    <property type="molecule type" value="Genomic_DNA"/>
</dbReference>
<dbReference type="EMBL" id="AP009048">
    <property type="protein sequence ID" value="BAA36044.1"/>
    <property type="molecule type" value="Genomic_DNA"/>
</dbReference>
<dbReference type="PIR" id="B53383">
    <property type="entry name" value="B53383"/>
</dbReference>
<dbReference type="RefSeq" id="NP_415707.1">
    <property type="nucleotide sequence ID" value="NC_000913.3"/>
</dbReference>
<dbReference type="RefSeq" id="WP_001266908.1">
    <property type="nucleotide sequence ID" value="NZ_STEB01000023.1"/>
</dbReference>
<dbReference type="SMR" id="P0A6J5"/>
<dbReference type="BioGRID" id="4260104">
    <property type="interactions" value="50"/>
</dbReference>
<dbReference type="DIP" id="DIP-6852N"/>
<dbReference type="FunCoup" id="P0A6J5">
    <property type="interactions" value="753"/>
</dbReference>
<dbReference type="IntAct" id="P0A6J5">
    <property type="interactions" value="21"/>
</dbReference>
<dbReference type="STRING" id="511145.b1189"/>
<dbReference type="jPOST" id="P0A6J5"/>
<dbReference type="PaxDb" id="511145-b1189"/>
<dbReference type="EnsemblBacteria" id="AAC74273">
    <property type="protein sequence ID" value="AAC74273"/>
    <property type="gene ID" value="b1189"/>
</dbReference>
<dbReference type="GeneID" id="93776243"/>
<dbReference type="GeneID" id="945752"/>
<dbReference type="KEGG" id="ecj:JW1178"/>
<dbReference type="KEGG" id="eco:b1189"/>
<dbReference type="KEGG" id="ecoc:C3026_07000"/>
<dbReference type="PATRIC" id="fig|1411691.4.peg.1098"/>
<dbReference type="EchoBASE" id="EB1379"/>
<dbReference type="eggNOG" id="COG0665">
    <property type="taxonomic scope" value="Bacteria"/>
</dbReference>
<dbReference type="HOGENOM" id="CLU_007884_9_2_6"/>
<dbReference type="InParanoid" id="P0A6J5"/>
<dbReference type="OMA" id="YSITFKM"/>
<dbReference type="OrthoDB" id="9805337at2"/>
<dbReference type="PhylomeDB" id="P0A6J5"/>
<dbReference type="BioCyc" id="EcoCyc:DALADEHYDROGA-MONOMER"/>
<dbReference type="BioCyc" id="MetaCyc:DALADEHYDROGA-MONOMER"/>
<dbReference type="SABIO-RK" id="P0A6J5"/>
<dbReference type="UniPathway" id="UPA00043">
    <property type="reaction ID" value="UER00498"/>
</dbReference>
<dbReference type="PRO" id="PR:P0A6J5"/>
<dbReference type="Proteomes" id="UP000000625">
    <property type="component" value="Chromosome"/>
</dbReference>
<dbReference type="GO" id="GO:0005737">
    <property type="term" value="C:cytoplasm"/>
    <property type="evidence" value="ECO:0000318"/>
    <property type="project" value="GO_Central"/>
</dbReference>
<dbReference type="GO" id="GO:0005886">
    <property type="term" value="C:plasma membrane"/>
    <property type="evidence" value="ECO:0000314"/>
    <property type="project" value="EcoCyc"/>
</dbReference>
<dbReference type="GO" id="GO:0008718">
    <property type="term" value="F:D-amino-acid dehydrogenase activity"/>
    <property type="evidence" value="ECO:0000314"/>
    <property type="project" value="EcoCyc"/>
</dbReference>
<dbReference type="GO" id="GO:0042803">
    <property type="term" value="F:protein homodimerization activity"/>
    <property type="evidence" value="ECO:0000314"/>
    <property type="project" value="EcoCyc"/>
</dbReference>
<dbReference type="GO" id="GO:0055130">
    <property type="term" value="P:D-alanine catabolic process"/>
    <property type="evidence" value="ECO:0000315"/>
    <property type="project" value="EcoCyc"/>
</dbReference>
<dbReference type="GO" id="GO:0019480">
    <property type="term" value="P:L-alanine oxidation to pyruvate via D-alanine"/>
    <property type="evidence" value="ECO:0000315"/>
    <property type="project" value="EcoCyc"/>
</dbReference>
<dbReference type="FunFam" id="3.50.50.60:FF:000020">
    <property type="entry name" value="D-amino acid dehydrogenase"/>
    <property type="match status" value="1"/>
</dbReference>
<dbReference type="Gene3D" id="3.30.9.10">
    <property type="entry name" value="D-Amino Acid Oxidase, subunit A, domain 2"/>
    <property type="match status" value="1"/>
</dbReference>
<dbReference type="Gene3D" id="3.50.50.60">
    <property type="entry name" value="FAD/NAD(P)-binding domain"/>
    <property type="match status" value="2"/>
</dbReference>
<dbReference type="HAMAP" id="MF_01202">
    <property type="entry name" value="DadA"/>
    <property type="match status" value="1"/>
</dbReference>
<dbReference type="InterPro" id="IPR023080">
    <property type="entry name" value="DadA"/>
</dbReference>
<dbReference type="InterPro" id="IPR006076">
    <property type="entry name" value="FAD-dep_OxRdtase"/>
</dbReference>
<dbReference type="InterPro" id="IPR036188">
    <property type="entry name" value="FAD/NAD-bd_sf"/>
</dbReference>
<dbReference type="NCBIfam" id="NF001933">
    <property type="entry name" value="PRK00711.1"/>
    <property type="match status" value="1"/>
</dbReference>
<dbReference type="PANTHER" id="PTHR13847:SF280">
    <property type="entry name" value="D-AMINO ACID DEHYDROGENASE"/>
    <property type="match status" value="1"/>
</dbReference>
<dbReference type="PANTHER" id="PTHR13847">
    <property type="entry name" value="SARCOSINE DEHYDROGENASE-RELATED"/>
    <property type="match status" value="1"/>
</dbReference>
<dbReference type="Pfam" id="PF01266">
    <property type="entry name" value="DAO"/>
    <property type="match status" value="1"/>
</dbReference>
<dbReference type="SUPFAM" id="SSF54373">
    <property type="entry name" value="FAD-linked reductases, C-terminal domain"/>
    <property type="match status" value="1"/>
</dbReference>
<dbReference type="SUPFAM" id="SSF51905">
    <property type="entry name" value="FAD/NAD(P)-binding domain"/>
    <property type="match status" value="1"/>
</dbReference>
<reference key="1">
    <citation type="journal article" date="1994" name="J. Bacteriol.">
        <title>Organization and expression of the Escherichia coli K-12 dad operon encoding the smaller subunit of D-amino acid dehydrogenase and the catabolic alanine racemase.</title>
        <authorList>
            <person name="Lobocka M."/>
            <person name="Hennig J."/>
            <person name="Wild J."/>
            <person name="Klopotowski T."/>
        </authorList>
    </citation>
    <scope>NUCLEOTIDE SEQUENCE [GENOMIC DNA]</scope>
    <source>
        <strain>K12</strain>
    </source>
</reference>
<reference key="2">
    <citation type="journal article" date="1996" name="DNA Res.">
        <title>A 718-kb DNA sequence of the Escherichia coli K-12 genome corresponding to the 12.7-28.0 min region on the linkage map.</title>
        <authorList>
            <person name="Oshima T."/>
            <person name="Aiba H."/>
            <person name="Baba T."/>
            <person name="Fujita K."/>
            <person name="Hayashi K."/>
            <person name="Honjo A."/>
            <person name="Ikemoto K."/>
            <person name="Inada T."/>
            <person name="Itoh T."/>
            <person name="Kajihara M."/>
            <person name="Kanai K."/>
            <person name="Kashimoto K."/>
            <person name="Kimura S."/>
            <person name="Kitagawa M."/>
            <person name="Makino K."/>
            <person name="Masuda S."/>
            <person name="Miki T."/>
            <person name="Mizobuchi K."/>
            <person name="Mori H."/>
            <person name="Motomura K."/>
            <person name="Nakamura Y."/>
            <person name="Nashimoto H."/>
            <person name="Nishio Y."/>
            <person name="Saito N."/>
            <person name="Sampei G."/>
            <person name="Seki Y."/>
            <person name="Tagami H."/>
            <person name="Takemoto K."/>
            <person name="Wada C."/>
            <person name="Yamamoto Y."/>
            <person name="Yano M."/>
            <person name="Horiuchi T."/>
        </authorList>
    </citation>
    <scope>NUCLEOTIDE SEQUENCE [LARGE SCALE GENOMIC DNA]</scope>
    <source>
        <strain>K12 / W3110 / ATCC 27325 / DSM 5911</strain>
    </source>
</reference>
<reference key="3">
    <citation type="journal article" date="1997" name="Science">
        <title>The complete genome sequence of Escherichia coli K-12.</title>
        <authorList>
            <person name="Blattner F.R."/>
            <person name="Plunkett G. III"/>
            <person name="Bloch C.A."/>
            <person name="Perna N.T."/>
            <person name="Burland V."/>
            <person name="Riley M."/>
            <person name="Collado-Vides J."/>
            <person name="Glasner J.D."/>
            <person name="Rode C.K."/>
            <person name="Mayhew G.F."/>
            <person name="Gregor J."/>
            <person name="Davis N.W."/>
            <person name="Kirkpatrick H.A."/>
            <person name="Goeden M.A."/>
            <person name="Rose D.J."/>
            <person name="Mau B."/>
            <person name="Shao Y."/>
        </authorList>
    </citation>
    <scope>NUCLEOTIDE SEQUENCE [LARGE SCALE GENOMIC DNA]</scope>
    <source>
        <strain>K12 / MG1655 / ATCC 47076</strain>
    </source>
</reference>
<reference key="4">
    <citation type="journal article" date="2006" name="Mol. Syst. Biol.">
        <title>Highly accurate genome sequences of Escherichia coli K-12 strains MG1655 and W3110.</title>
        <authorList>
            <person name="Hayashi K."/>
            <person name="Morooka N."/>
            <person name="Yamamoto Y."/>
            <person name="Fujita K."/>
            <person name="Isono K."/>
            <person name="Choi S."/>
            <person name="Ohtsubo E."/>
            <person name="Baba T."/>
            <person name="Wanner B.L."/>
            <person name="Mori H."/>
            <person name="Horiuchi T."/>
        </authorList>
    </citation>
    <scope>NUCLEOTIDE SEQUENCE [LARGE SCALE GENOMIC DNA]</scope>
    <source>
        <strain>K12 / W3110 / ATCC 27325 / DSM 5911</strain>
    </source>
</reference>
<reference key="5">
    <citation type="journal article" date="1976" name="Mol. Gen. Genet.">
        <title>Biochemical, genetic, and regulatory studies of alanine catabolism in Escherichia coli K12.</title>
        <authorList>
            <person name="Franklin F.C."/>
            <person name="Venables W.A."/>
        </authorList>
    </citation>
    <scope>FUNCTION</scope>
    <scope>CATALYTIC ACTIVITY</scope>
    <scope>BIOPHYSICOCHEMICAL PROPERTIES</scope>
    <scope>SUBSTRATE SPECIFICITY</scope>
    <scope>SUBCELLULAR LOCATION</scope>
    <scope>INDUCTION</scope>
    <scope>DISRUPTION PHENOTYPE</scope>
    <source>
        <strain>K12</strain>
    </source>
</reference>
<reference key="6">
    <citation type="journal article" date="1999" name="J. Biol. Chem.">
        <title>Functional characterization of the D-Tyr-tRNATyr deacylase from Escherichia coli.</title>
        <authorList>
            <person name="Soutourina J."/>
            <person name="Plateau P."/>
            <person name="Delort F."/>
            <person name="Peirotes A."/>
            <person name="Blanquet S."/>
        </authorList>
    </citation>
    <scope>DISRUPTION PHENOTYPE</scope>
    <source>
        <strain>K12 / EC989</strain>
    </source>
</reference>
<reference key="7">
    <citation type="journal article" date="2004" name="FEMS Microbiol. Lett.">
        <title>Oxidation of 3,4-dehydro-D-proline and other D-amino acid analogues by D-alanine dehydrogenase from Escherichia coli.</title>
        <authorList>
            <person name="Deutch C.E."/>
        </authorList>
    </citation>
    <scope>FUNCTION</scope>
    <scope>CATALYTIC ACTIVITY</scope>
    <scope>BIOPHYSICOCHEMICAL PROPERTIES</scope>
    <scope>SUBSTRATE SPECIFICITY</scope>
    <scope>ACTIVITY REGULATION</scope>
    <scope>SUBCELLULAR LOCATION</scope>
</reference>
<reference key="8">
    <citation type="journal article" date="2011" name="PLoS ONE">
        <title>E. coli histidine triad nucleotide binding protein 1 (ecHinT) is a catalytic regulator of D-alanine dehydrogenase (DadA) activity in vivo.</title>
        <authorList>
            <person name="Bardaweel S."/>
            <person name="Ghosh B."/>
            <person name="Chou T.F."/>
            <person name="Sadowsky M.J."/>
            <person name="Wagner C.R."/>
        </authorList>
    </citation>
    <scope>ACTIVITY REGULATION</scope>
</reference>
<comment type="function">
    <text evidence="4 5">Catalyzes the oxidative deamination of D-amino acids. Has broad substrate specificity; is mostly active on D-alanine, and to a lesser extent, on several other D-amino acids such as D-methionine, D-serine and D-proline, but not on L-alanine. Participates in the utilization of L-alanine and D-alanine as the sole source of carbon, nitrogen and energy for growth. Is also able to oxidize D-amino acid analogs such as 3,4-dehydro-D-proline, D-2-aminobutyrate, D-norvaline, D-norleucine, cis-4-hydroxy-D-proline, and DL-ethionine.</text>
</comment>
<comment type="catalytic activity">
    <reaction evidence="4 5">
        <text>a D-alpha-amino acid + A + H2O = a 2-oxocarboxylate + AH2 + NH4(+)</text>
        <dbReference type="Rhea" id="RHEA:18125"/>
        <dbReference type="ChEBI" id="CHEBI:13193"/>
        <dbReference type="ChEBI" id="CHEBI:15377"/>
        <dbReference type="ChEBI" id="CHEBI:17499"/>
        <dbReference type="ChEBI" id="CHEBI:28938"/>
        <dbReference type="ChEBI" id="CHEBI:35179"/>
        <dbReference type="ChEBI" id="CHEBI:59871"/>
    </reaction>
</comment>
<comment type="cofactor">
    <cofactor evidence="1">
        <name>FAD</name>
        <dbReference type="ChEBI" id="CHEBI:57692"/>
    </cofactor>
</comment>
<comment type="activity regulation">
    <text evidence="5 6">Is activated by the HinT protein. Is inhibited by D-cycloserine.</text>
</comment>
<comment type="biophysicochemical properties">
    <kinetics>
        <KM evidence="4 5">30 mM for D-alanine</KM>
        <KM evidence="4 5">6.4 mM for 3,4-dehydro-D-proline</KM>
    </kinetics>
    <phDependence>
        <text evidence="4 5">Optimum pH is about 8.9 with D-alanine as substrate and about 9 with 3,4-dehydro-D-proline as substrate.</text>
    </phDependence>
</comment>
<comment type="pathway">
    <text>Amino-acid degradation; D-alanine degradation; NH(3) and pyruvate from D-alanine: step 1/1.</text>
</comment>
<comment type="subcellular location">
    <subcellularLocation>
        <location evidence="4 5">Cell inner membrane</location>
        <topology evidence="4 5">Peripheral membrane protein</topology>
    </subcellularLocation>
</comment>
<comment type="induction">
    <text evidence="4">By D-alanine. Is regulated by catabolite repression.</text>
</comment>
<comment type="disruption phenotype">
    <text evidence="3 4">Loss of the ability to utilize both D- and L-stereoisomers of alanine as sole sources of carbon, nitrogen and energy for growth (PubMed:13292). A double dtd-dadA deletion mutant has a pronounced growth defect in the presence of D-tyrosine (PubMed:10383414).</text>
</comment>
<comment type="similarity">
    <text evidence="7">Belongs to the DadA oxidoreductase family.</text>
</comment>
<comment type="caution">
    <text evidence="7">Was originally thought to be a heterodimer based on the purification of the enzyme first reported from E.coli B, but results of enzyme assays in PubMed:21378189 have indicated that DadA is solely responsible for the observed dehydrogenase activity.</text>
</comment>